<gene>
    <name evidence="1" type="primary">hisB</name>
    <name type="ordered locus">MM_1505</name>
</gene>
<name>HIS7_METMA</name>
<feature type="chain" id="PRO_0000158191" description="Imidazoleglycerol-phosphate dehydratase">
    <location>
        <begin position="1"/>
        <end position="191"/>
    </location>
</feature>
<protein>
    <recommendedName>
        <fullName evidence="1">Imidazoleglycerol-phosphate dehydratase</fullName>
        <shortName evidence="1">IGPD</shortName>
        <ecNumber evidence="1">4.2.1.19</ecNumber>
    </recommendedName>
</protein>
<organism>
    <name type="scientific">Methanosarcina mazei (strain ATCC BAA-159 / DSM 3647 / Goe1 / Go1 / JCM 11833 / OCM 88)</name>
    <name type="common">Methanosarcina frisia</name>
    <dbReference type="NCBI Taxonomy" id="192952"/>
    <lineage>
        <taxon>Archaea</taxon>
        <taxon>Methanobacteriati</taxon>
        <taxon>Methanobacteriota</taxon>
        <taxon>Stenosarchaea group</taxon>
        <taxon>Methanomicrobia</taxon>
        <taxon>Methanosarcinales</taxon>
        <taxon>Methanosarcinaceae</taxon>
        <taxon>Methanosarcina</taxon>
    </lineage>
</organism>
<keyword id="KW-0028">Amino-acid biosynthesis</keyword>
<keyword id="KW-0963">Cytoplasm</keyword>
<keyword id="KW-0368">Histidine biosynthesis</keyword>
<keyword id="KW-0456">Lyase</keyword>
<proteinExistence type="inferred from homology"/>
<accession>Q8PWS1</accession>
<evidence type="ECO:0000255" key="1">
    <source>
        <dbReference type="HAMAP-Rule" id="MF_00076"/>
    </source>
</evidence>
<sequence>MRISKISRKTKETDIQLEINLDGKGTADVSTGIGFFDHMLSSFARHAEFDLKVRAEGDLYVDEHHLIEDTGIVLGKALAEALGDMAGIARFGEARIPMDEALAEVALDVGGRSYLVMKADFIAPQVGQFSTQLVKHFFETVASNAKITIHASVYGDNDHHKIEALFKAFAYAMKRAVKIEGKEVKSTKGTL</sequence>
<comment type="catalytic activity">
    <reaction evidence="1">
        <text>D-erythro-1-(imidazol-4-yl)glycerol 3-phosphate = 3-(imidazol-4-yl)-2-oxopropyl phosphate + H2O</text>
        <dbReference type="Rhea" id="RHEA:11040"/>
        <dbReference type="ChEBI" id="CHEBI:15377"/>
        <dbReference type="ChEBI" id="CHEBI:57766"/>
        <dbReference type="ChEBI" id="CHEBI:58278"/>
        <dbReference type="EC" id="4.2.1.19"/>
    </reaction>
</comment>
<comment type="pathway">
    <text evidence="1">Amino-acid biosynthesis; L-histidine biosynthesis; L-histidine from 5-phospho-alpha-D-ribose 1-diphosphate: step 6/9.</text>
</comment>
<comment type="subcellular location">
    <subcellularLocation>
        <location evidence="1">Cytoplasm</location>
    </subcellularLocation>
</comment>
<comment type="similarity">
    <text evidence="1">Belongs to the imidazoleglycerol-phosphate dehydratase family.</text>
</comment>
<reference key="1">
    <citation type="journal article" date="2002" name="J. Mol. Microbiol. Biotechnol.">
        <title>The genome of Methanosarcina mazei: evidence for lateral gene transfer between Bacteria and Archaea.</title>
        <authorList>
            <person name="Deppenmeier U."/>
            <person name="Johann A."/>
            <person name="Hartsch T."/>
            <person name="Merkl R."/>
            <person name="Schmitz R.A."/>
            <person name="Martinez-Arias R."/>
            <person name="Henne A."/>
            <person name="Wiezer A."/>
            <person name="Baeumer S."/>
            <person name="Jacobi C."/>
            <person name="Brueggemann H."/>
            <person name="Lienard T."/>
            <person name="Christmann A."/>
            <person name="Boemecke M."/>
            <person name="Steckel S."/>
            <person name="Bhattacharyya A."/>
            <person name="Lykidis A."/>
            <person name="Overbeek R."/>
            <person name="Klenk H.-P."/>
            <person name="Gunsalus R.P."/>
            <person name="Fritz H.-J."/>
            <person name="Gottschalk G."/>
        </authorList>
    </citation>
    <scope>NUCLEOTIDE SEQUENCE [LARGE SCALE GENOMIC DNA]</scope>
    <source>
        <strain>ATCC BAA-159 / DSM 3647 / Goe1 / Go1 / JCM 11833 / OCM 88</strain>
    </source>
</reference>
<dbReference type="EC" id="4.2.1.19" evidence="1"/>
<dbReference type="EMBL" id="AE008384">
    <property type="protein sequence ID" value="AAM31201.1"/>
    <property type="molecule type" value="Genomic_DNA"/>
</dbReference>
<dbReference type="RefSeq" id="WP_011033451.1">
    <property type="nucleotide sequence ID" value="NC_003901.1"/>
</dbReference>
<dbReference type="SMR" id="Q8PWS1"/>
<dbReference type="GeneID" id="1479847"/>
<dbReference type="GeneID" id="82160550"/>
<dbReference type="KEGG" id="mma:MM_1505"/>
<dbReference type="PATRIC" id="fig|192952.21.peg.1737"/>
<dbReference type="eggNOG" id="arCOG04398">
    <property type="taxonomic scope" value="Archaea"/>
</dbReference>
<dbReference type="HOGENOM" id="CLU_044308_3_0_2"/>
<dbReference type="UniPathway" id="UPA00031">
    <property type="reaction ID" value="UER00011"/>
</dbReference>
<dbReference type="Proteomes" id="UP000000595">
    <property type="component" value="Chromosome"/>
</dbReference>
<dbReference type="GO" id="GO:0005737">
    <property type="term" value="C:cytoplasm"/>
    <property type="evidence" value="ECO:0007669"/>
    <property type="project" value="UniProtKB-SubCell"/>
</dbReference>
<dbReference type="GO" id="GO:0004424">
    <property type="term" value="F:imidazoleglycerol-phosphate dehydratase activity"/>
    <property type="evidence" value="ECO:0007669"/>
    <property type="project" value="UniProtKB-UniRule"/>
</dbReference>
<dbReference type="GO" id="GO:0000105">
    <property type="term" value="P:L-histidine biosynthetic process"/>
    <property type="evidence" value="ECO:0007669"/>
    <property type="project" value="UniProtKB-UniRule"/>
</dbReference>
<dbReference type="CDD" id="cd07914">
    <property type="entry name" value="IGPD"/>
    <property type="match status" value="1"/>
</dbReference>
<dbReference type="FunFam" id="3.30.230.40:FF:000001">
    <property type="entry name" value="Imidazoleglycerol-phosphate dehydratase HisB"/>
    <property type="match status" value="1"/>
</dbReference>
<dbReference type="FunFam" id="3.30.230.40:FF:000003">
    <property type="entry name" value="Imidazoleglycerol-phosphate dehydratase HisB"/>
    <property type="match status" value="1"/>
</dbReference>
<dbReference type="Gene3D" id="3.30.230.40">
    <property type="entry name" value="Imidazole glycerol phosphate dehydratase, domain 1"/>
    <property type="match status" value="2"/>
</dbReference>
<dbReference type="HAMAP" id="MF_00076">
    <property type="entry name" value="HisB"/>
    <property type="match status" value="1"/>
</dbReference>
<dbReference type="InterPro" id="IPR038494">
    <property type="entry name" value="IGPD_sf"/>
</dbReference>
<dbReference type="InterPro" id="IPR000807">
    <property type="entry name" value="ImidazoleglycerolP_deHydtase"/>
</dbReference>
<dbReference type="InterPro" id="IPR020565">
    <property type="entry name" value="ImidazoleglycerP_deHydtase_CS"/>
</dbReference>
<dbReference type="InterPro" id="IPR020568">
    <property type="entry name" value="Ribosomal_Su5_D2-typ_SF"/>
</dbReference>
<dbReference type="NCBIfam" id="NF002111">
    <property type="entry name" value="PRK00951.2-1"/>
    <property type="match status" value="1"/>
</dbReference>
<dbReference type="NCBIfam" id="NF002114">
    <property type="entry name" value="PRK00951.2-4"/>
    <property type="match status" value="1"/>
</dbReference>
<dbReference type="PANTHER" id="PTHR23133:SF2">
    <property type="entry name" value="IMIDAZOLEGLYCEROL-PHOSPHATE DEHYDRATASE"/>
    <property type="match status" value="1"/>
</dbReference>
<dbReference type="PANTHER" id="PTHR23133">
    <property type="entry name" value="IMIDAZOLEGLYCEROL-PHOSPHATE DEHYDRATASE HIS7"/>
    <property type="match status" value="1"/>
</dbReference>
<dbReference type="Pfam" id="PF00475">
    <property type="entry name" value="IGPD"/>
    <property type="match status" value="1"/>
</dbReference>
<dbReference type="SUPFAM" id="SSF54211">
    <property type="entry name" value="Ribosomal protein S5 domain 2-like"/>
    <property type="match status" value="2"/>
</dbReference>
<dbReference type="PROSITE" id="PS00954">
    <property type="entry name" value="IGP_DEHYDRATASE_1"/>
    <property type="match status" value="1"/>
</dbReference>
<dbReference type="PROSITE" id="PS00955">
    <property type="entry name" value="IGP_DEHYDRATASE_2"/>
    <property type="match status" value="1"/>
</dbReference>